<accession>A0A067NGV3</accession>
<proteinExistence type="evidence at transcript level"/>
<reference key="1">
    <citation type="journal article" date="2014" name="Proc. Natl. Acad. Sci. U.S.A.">
        <title>Extensive sampling of basidiomycete genomes demonstrates inadequacy of the white-rot/brown-rot paradigm for wood decay fungi.</title>
        <authorList>
            <person name="Riley R."/>
            <person name="Salamov A.A."/>
            <person name="Brown D.W."/>
            <person name="Nagy L.G."/>
            <person name="Floudas D."/>
            <person name="Held B.W."/>
            <person name="Levasseur A."/>
            <person name="Lombard V."/>
            <person name="Morin E."/>
            <person name="Otillar R."/>
            <person name="Lindquist E.A."/>
            <person name="Sun H."/>
            <person name="LaButti K.M."/>
            <person name="Schmutz J."/>
            <person name="Jabbour D."/>
            <person name="Luo H."/>
            <person name="Baker S.E."/>
            <person name="Pisabarro A.G."/>
            <person name="Walton J.D."/>
            <person name="Blanchette R.A."/>
            <person name="Henrissat B."/>
            <person name="Martin F."/>
            <person name="Cullen D."/>
            <person name="Hibbett D.S."/>
            <person name="Grigoriev I.V."/>
        </authorList>
    </citation>
    <scope>NUCLEOTIDE SEQUENCE [LARGE SCALE GENOMIC DNA]</scope>
    <source>
        <strain>PC15</strain>
    </source>
</reference>
<reference key="2">
    <citation type="journal article" date="1998" name="Appl. Environ. Microbiol.">
        <title>Identification, characterization, and In situ detection of a fruit-body-specific hydrophobin of Pleurotus ostreatus.</title>
        <authorList>
            <person name="Penas M.M."/>
            <person name="Asgeirsdottir S.A."/>
            <person name="Lasa I."/>
            <person name="Culianez-Macia F.A."/>
            <person name="Pisabarro A.G."/>
            <person name="Wessels J.G."/>
            <person name="Ramirez L."/>
        </authorList>
    </citation>
    <scope>IDENTIFICATION</scope>
    <scope>DEVELOPMENTAL STAGE</scope>
</reference>
<reference key="3">
    <citation type="journal article" date="2004" name="Mycologia">
        <title>Structure of gene coding for the fruit body-specific hydrophobin Fbh1 of the edible basidiomycete Pleurotus ostreatus.</title>
        <authorList>
            <person name="Penas M.M."/>
            <person name="Aranguren J."/>
            <person name="Ramirez L."/>
            <person name="Pisabarro A.G."/>
        </authorList>
    </citation>
    <scope>IDENTIFICATION</scope>
</reference>
<reference key="4">
    <citation type="journal article" date="2021" name="Microbiol. Res.">
        <title>Identification of hydrophobin genes and their physiological functions related to growth and development in Pleurotus ostreatus.</title>
        <authorList>
            <person name="Xu D."/>
            <person name="Wang Y."/>
            <person name="Keerio A.A."/>
            <person name="Ma A."/>
        </authorList>
    </citation>
    <scope>FUNCTION</scope>
    <scope>DISRUPTION PHENOTYPE</scope>
    <scope>DEVELOPMENTAL STAGE</scope>
</reference>
<sequence length="113" mass="11121">MFSIRIATVVLAASALLAAASPITNTETPVNQCGSGSIQCCESVQSASAAQAAGILGPLDILTNLQGLVASHCSPLAAVGVSGTSCSSQTVCCKDVSKSGLVNLGCSPINLNL</sequence>
<keyword id="KW-0134">Cell wall</keyword>
<keyword id="KW-1015">Disulfide bond</keyword>
<keyword id="KW-1185">Reference proteome</keyword>
<keyword id="KW-0964">Secreted</keyword>
<keyword id="KW-0732">Signal</keyword>
<evidence type="ECO:0000250" key="1">
    <source>
        <dbReference type="UniProtKB" id="Q04571"/>
    </source>
</evidence>
<evidence type="ECO:0000255" key="2"/>
<evidence type="ECO:0000269" key="3">
    <source>
    </source>
</evidence>
<evidence type="ECO:0000269" key="4">
    <source>
    </source>
</evidence>
<evidence type="ECO:0000303" key="5">
    <source>
    </source>
</evidence>
<evidence type="ECO:0000305" key="6"/>
<evidence type="ECO:0000305" key="7">
    <source>
    </source>
</evidence>
<organism>
    <name type="scientific">Pleurotus ostreatus (strain PC15)</name>
    <name type="common">Oyster mushroom</name>
    <dbReference type="NCBI Taxonomy" id="1137138"/>
    <lineage>
        <taxon>Eukaryota</taxon>
        <taxon>Fungi</taxon>
        <taxon>Dikarya</taxon>
        <taxon>Basidiomycota</taxon>
        <taxon>Agaricomycotina</taxon>
        <taxon>Agaricomycetes</taxon>
        <taxon>Agaricomycetidae</taxon>
        <taxon>Agaricales</taxon>
        <taxon>Pleurotineae</taxon>
        <taxon>Pleurotaceae</taxon>
        <taxon>Pleurotus</taxon>
    </lineage>
</organism>
<dbReference type="EMBL" id="KL198014">
    <property type="protein sequence ID" value="KDQ22991.1"/>
    <property type="molecule type" value="Genomic_DNA"/>
</dbReference>
<dbReference type="VEuPathDB" id="FungiDB:PLEOSDRAFT_47325"/>
<dbReference type="HOGENOM" id="CLU_105134_3_1_1"/>
<dbReference type="InParanoid" id="A0A067NGV3"/>
<dbReference type="OrthoDB" id="138913at5338"/>
<dbReference type="Proteomes" id="UP000027073">
    <property type="component" value="Unassembled WGS sequence"/>
</dbReference>
<dbReference type="GO" id="GO:0005576">
    <property type="term" value="C:extracellular region"/>
    <property type="evidence" value="ECO:0007669"/>
    <property type="project" value="UniProtKB-KW"/>
</dbReference>
<dbReference type="GO" id="GO:0009277">
    <property type="term" value="C:fungal-type cell wall"/>
    <property type="evidence" value="ECO:0007669"/>
    <property type="project" value="InterPro"/>
</dbReference>
<dbReference type="GO" id="GO:0005199">
    <property type="term" value="F:structural constituent of cell wall"/>
    <property type="evidence" value="ECO:0007669"/>
    <property type="project" value="InterPro"/>
</dbReference>
<dbReference type="CDD" id="cd23507">
    <property type="entry name" value="hydrophobin_I"/>
    <property type="match status" value="1"/>
</dbReference>
<dbReference type="InterPro" id="IPR001338">
    <property type="entry name" value="Hydrophobin"/>
</dbReference>
<dbReference type="Pfam" id="PF01185">
    <property type="entry name" value="Hydrophobin"/>
    <property type="match status" value="1"/>
</dbReference>
<dbReference type="SMART" id="SM00075">
    <property type="entry name" value="HYDRO"/>
    <property type="match status" value="1"/>
</dbReference>
<protein>
    <recommendedName>
        <fullName evidence="5">Fruiting body-specific class I hydrophobin fbh1</fullName>
    </recommendedName>
</protein>
<comment type="function">
    <text evidence="3 6">Aerial growth, conidiation, and dispersal of filamentous fungi in the environment rely upon a capability of their secreting small amphipathic proteins called hydrophobins (HPBs) with low sequence identity. Class I can self-assemble into an outermost layer of rodlet bundles on aerial cell surfaces, conferring cellular hydrophobicity that supports fungal growth, development and dispersal; whereas Class II form highly ordered films at water-air interfaces through intermolecular interactions but contribute nothing to the rodlet structure (Probable). Fbh1 is a fruiting body-specific class I hydrophobin that is involved in the growth rate and primordia formation (PubMed:33636611).</text>
</comment>
<comment type="subunit">
    <text evidence="1">Self-assembles to form functional amyloid fibrils called rodlets. Self-assembly into fibrillar rodlets occurs spontaneously at hydrophobic:hydrophilic interfaces and the rodlets further associate laterally to form amphipathic monolayers.</text>
</comment>
<comment type="subcellular location">
    <subcellularLocation>
        <location evidence="7">Secreted</location>
    </subcellularLocation>
    <subcellularLocation>
        <location evidence="7">Secreted</location>
        <location evidence="7">Cell wall</location>
    </subcellularLocation>
</comment>
<comment type="developmental stage">
    <text evidence="3 4">Expressed in fruiting bodies but absent in both monokaryotic and dikaryotic mycelia.</text>
</comment>
<comment type="disruption phenotype">
    <text evidence="3">Leads to retarded growth and displays denser aerial mycelia (PubMed:33636611). Slows down primordia formation, leading to fewer primordia and subsequently fewer fruiting bodies (PubMed:33636611).</text>
</comment>
<comment type="similarity">
    <text evidence="6">Belongs to the fungal hydrophobin family.</text>
</comment>
<feature type="signal peptide" evidence="2">
    <location>
        <begin position="1"/>
        <end position="20"/>
    </location>
</feature>
<feature type="chain" id="PRO_5013986426" description="Fruiting body-specific class I hydrophobin fbh1">
    <location>
        <begin position="21"/>
        <end position="113"/>
    </location>
</feature>
<feature type="disulfide bond" evidence="1">
    <location>
        <begin position="33"/>
        <end position="92"/>
    </location>
</feature>
<feature type="disulfide bond" evidence="1">
    <location>
        <begin position="40"/>
        <end position="86"/>
    </location>
</feature>
<feature type="disulfide bond" evidence="1">
    <location>
        <begin position="41"/>
        <end position="73"/>
    </location>
</feature>
<feature type="disulfide bond" evidence="1">
    <location>
        <begin position="93"/>
        <end position="106"/>
    </location>
</feature>
<gene>
    <name evidence="5" type="primary">fbh1</name>
    <name type="ORF">PLEOSDRAFT_47325</name>
</gene>
<name>FBH1_PLEO1</name>